<reference key="1">
    <citation type="journal article" date="2006" name="Nature">
        <title>Human chromosome 11 DNA sequence and analysis including novel gene identification.</title>
        <authorList>
            <person name="Taylor T.D."/>
            <person name="Noguchi H."/>
            <person name="Totoki Y."/>
            <person name="Toyoda A."/>
            <person name="Kuroki Y."/>
            <person name="Dewar K."/>
            <person name="Lloyd C."/>
            <person name="Itoh T."/>
            <person name="Takeda T."/>
            <person name="Kim D.-W."/>
            <person name="She X."/>
            <person name="Barlow K.F."/>
            <person name="Bloom T."/>
            <person name="Bruford E."/>
            <person name="Chang J.L."/>
            <person name="Cuomo C.A."/>
            <person name="Eichler E."/>
            <person name="FitzGerald M.G."/>
            <person name="Jaffe D.B."/>
            <person name="LaButti K."/>
            <person name="Nicol R."/>
            <person name="Park H.-S."/>
            <person name="Seaman C."/>
            <person name="Sougnez C."/>
            <person name="Yang X."/>
            <person name="Zimmer A.R."/>
            <person name="Zody M.C."/>
            <person name="Birren B.W."/>
            <person name="Nusbaum C."/>
            <person name="Fujiyama A."/>
            <person name="Hattori M."/>
            <person name="Rogers J."/>
            <person name="Lander E.S."/>
            <person name="Sakaki Y."/>
        </authorList>
    </citation>
    <scope>NUCLEOTIDE SEQUENCE [LARGE SCALE GENOMIC DNA]</scope>
</reference>
<keyword id="KW-1003">Cell membrane</keyword>
<keyword id="KW-1015">Disulfide bond</keyword>
<keyword id="KW-0297">G-protein coupled receptor</keyword>
<keyword id="KW-0325">Glycoprotein</keyword>
<keyword id="KW-0472">Membrane</keyword>
<keyword id="KW-0552">Olfaction</keyword>
<keyword id="KW-0675">Receptor</keyword>
<keyword id="KW-1185">Reference proteome</keyword>
<keyword id="KW-0716">Sensory transduction</keyword>
<keyword id="KW-0807">Transducer</keyword>
<keyword id="KW-0812">Transmembrane</keyword>
<keyword id="KW-1133">Transmembrane helix</keyword>
<feature type="chain" id="PRO_0000310456" description="Olfactory receptor 4C46">
    <location>
        <begin position="1"/>
        <end position="309"/>
    </location>
</feature>
<feature type="topological domain" description="Extracellular" evidence="1">
    <location>
        <begin position="1"/>
        <end position="23"/>
    </location>
</feature>
<feature type="transmembrane region" description="Helical; Name=1" evidence="1">
    <location>
        <begin position="24"/>
        <end position="44"/>
    </location>
</feature>
<feature type="topological domain" description="Cytoplasmic" evidence="1">
    <location>
        <begin position="45"/>
        <end position="46"/>
    </location>
</feature>
<feature type="transmembrane region" description="Helical; Name=2" evidence="1">
    <location>
        <begin position="47"/>
        <end position="67"/>
    </location>
</feature>
<feature type="topological domain" description="Extracellular" evidence="1">
    <location>
        <begin position="68"/>
        <end position="103"/>
    </location>
</feature>
<feature type="transmembrane region" description="Helical; Name=3" evidence="1">
    <location>
        <begin position="104"/>
        <end position="124"/>
    </location>
</feature>
<feature type="topological domain" description="Cytoplasmic" evidence="1">
    <location>
        <begin position="125"/>
        <end position="141"/>
    </location>
</feature>
<feature type="transmembrane region" description="Helical; Name=4" evidence="1">
    <location>
        <begin position="142"/>
        <end position="162"/>
    </location>
</feature>
<feature type="topological domain" description="Extracellular" evidence="1">
    <location>
        <begin position="163"/>
        <end position="202"/>
    </location>
</feature>
<feature type="transmembrane region" description="Helical; Name=5" evidence="1">
    <location>
        <begin position="203"/>
        <end position="223"/>
    </location>
</feature>
<feature type="topological domain" description="Cytoplasmic" evidence="1">
    <location>
        <begin position="224"/>
        <end position="236"/>
    </location>
</feature>
<feature type="transmembrane region" description="Helical; Name=6" evidence="1">
    <location>
        <begin position="237"/>
        <end position="257"/>
    </location>
</feature>
<feature type="topological domain" description="Extracellular" evidence="1">
    <location>
        <begin position="258"/>
        <end position="266"/>
    </location>
</feature>
<feature type="transmembrane region" description="Helical; Name=7" evidence="1">
    <location>
        <begin position="267"/>
        <end position="287"/>
    </location>
</feature>
<feature type="topological domain" description="Cytoplasmic" evidence="1">
    <location>
        <begin position="288"/>
        <end position="309"/>
    </location>
</feature>
<feature type="glycosylation site" description="N-linked (GlcNAc...) asparagine" evidence="1">
    <location>
        <position position="6"/>
    </location>
</feature>
<feature type="disulfide bond" evidence="2">
    <location>
        <begin position="95"/>
        <end position="177"/>
    </location>
</feature>
<feature type="sequence variant" id="VAR_037045" description="In dbSNP:rs11246607.">
    <original>S</original>
    <variation>F</variation>
    <location>
        <position position="240"/>
    </location>
</feature>
<feature type="sequence variant" id="VAR_037046" description="In dbSNP:rs11246608.">
    <original>C</original>
    <variation>Y</variation>
    <location>
        <position position="252"/>
    </location>
</feature>
<feature type="sequence variant" id="VAR_037047" description="In dbSNP:rs11246609.">
    <original>K</original>
    <variation>R</variation>
    <location>
        <position position="288"/>
    </location>
</feature>
<organism>
    <name type="scientific">Homo sapiens</name>
    <name type="common">Human</name>
    <dbReference type="NCBI Taxonomy" id="9606"/>
    <lineage>
        <taxon>Eukaryota</taxon>
        <taxon>Metazoa</taxon>
        <taxon>Chordata</taxon>
        <taxon>Craniata</taxon>
        <taxon>Vertebrata</taxon>
        <taxon>Euteleostomi</taxon>
        <taxon>Mammalia</taxon>
        <taxon>Eutheria</taxon>
        <taxon>Euarchontoglires</taxon>
        <taxon>Primates</taxon>
        <taxon>Haplorrhini</taxon>
        <taxon>Catarrhini</taxon>
        <taxon>Hominidae</taxon>
        <taxon>Homo</taxon>
    </lineage>
</organism>
<proteinExistence type="inferred from homology"/>
<name>O4C46_HUMAN</name>
<dbReference type="EMBL" id="AC126345">
    <property type="status" value="NOT_ANNOTATED_CDS"/>
    <property type="molecule type" value="Genomic_DNA"/>
</dbReference>
<dbReference type="CCDS" id="CCDS73288.1"/>
<dbReference type="RefSeq" id="NP_001004703.1">
    <property type="nucleotide sequence ID" value="NM_001004703.1"/>
</dbReference>
<dbReference type="SMR" id="A6NHA9"/>
<dbReference type="FunCoup" id="A6NHA9">
    <property type="interactions" value="416"/>
</dbReference>
<dbReference type="STRING" id="9606.ENSP00000329056"/>
<dbReference type="GlyCosmos" id="A6NHA9">
    <property type="glycosylation" value="1 site, No reported glycans"/>
</dbReference>
<dbReference type="GlyGen" id="A6NHA9">
    <property type="glycosylation" value="1 site"/>
</dbReference>
<dbReference type="iPTMnet" id="A6NHA9"/>
<dbReference type="PhosphoSitePlus" id="A6NHA9"/>
<dbReference type="BioMuta" id="OR4C46"/>
<dbReference type="PaxDb" id="9606-ENSP00000329056"/>
<dbReference type="Antibodypedia" id="78042">
    <property type="antibodies" value="10 antibodies from 8 providers"/>
</dbReference>
<dbReference type="DNASU" id="119749"/>
<dbReference type="Ensembl" id="ENST00000328188.1">
    <property type="protein sequence ID" value="ENSP00000329056.1"/>
    <property type="gene ID" value="ENSG00000185926.1"/>
</dbReference>
<dbReference type="GeneID" id="119749"/>
<dbReference type="KEGG" id="hsa:119749"/>
<dbReference type="MANE-Select" id="ENST00000328188.1">
    <property type="protein sequence ID" value="ENSP00000329056.1"/>
    <property type="RefSeq nucleotide sequence ID" value="NM_001004703.1"/>
    <property type="RefSeq protein sequence ID" value="NP_001004703.1"/>
</dbReference>
<dbReference type="UCSC" id="uc010ric.2">
    <property type="organism name" value="human"/>
</dbReference>
<dbReference type="AGR" id="HGNC:31271"/>
<dbReference type="CTD" id="119749"/>
<dbReference type="DisGeNET" id="119749"/>
<dbReference type="GeneCards" id="OR4C46"/>
<dbReference type="HGNC" id="HGNC:31271">
    <property type="gene designation" value="OR4C46"/>
</dbReference>
<dbReference type="HPA" id="ENSG00000185926">
    <property type="expression patterns" value="Not detected"/>
</dbReference>
<dbReference type="neXtProt" id="NX_A6NHA9"/>
<dbReference type="OpenTargets" id="ENSG00000185926"/>
<dbReference type="PharmGKB" id="PA134910149"/>
<dbReference type="VEuPathDB" id="HostDB:ENSG00000185926"/>
<dbReference type="eggNOG" id="ENOG502TE7F">
    <property type="taxonomic scope" value="Eukaryota"/>
</dbReference>
<dbReference type="GeneTree" id="ENSGT00940000154261"/>
<dbReference type="HOGENOM" id="CLU_012526_8_1_1"/>
<dbReference type="InParanoid" id="A6NHA9"/>
<dbReference type="OMA" id="CVYALLM"/>
<dbReference type="OrthoDB" id="10017003at2759"/>
<dbReference type="PAN-GO" id="A6NHA9">
    <property type="GO annotations" value="2 GO annotations based on evolutionary models"/>
</dbReference>
<dbReference type="PhylomeDB" id="A6NHA9"/>
<dbReference type="TreeFam" id="TF352732"/>
<dbReference type="PathwayCommons" id="A6NHA9"/>
<dbReference type="Reactome" id="R-HSA-9752946">
    <property type="pathway name" value="Expression and translocation of olfactory receptors"/>
</dbReference>
<dbReference type="BioGRID-ORCS" id="119749">
    <property type="hits" value="16 hits in 692 CRISPR screens"/>
</dbReference>
<dbReference type="ChiTaRS" id="OR4C46">
    <property type="organism name" value="human"/>
</dbReference>
<dbReference type="GenomeRNAi" id="119749"/>
<dbReference type="Pharos" id="A6NHA9">
    <property type="development level" value="Tdark"/>
</dbReference>
<dbReference type="PRO" id="PR:A6NHA9"/>
<dbReference type="Proteomes" id="UP000005640">
    <property type="component" value="Chromosome 11"/>
</dbReference>
<dbReference type="RNAct" id="A6NHA9">
    <property type="molecule type" value="protein"/>
</dbReference>
<dbReference type="GO" id="GO:0005886">
    <property type="term" value="C:plasma membrane"/>
    <property type="evidence" value="ECO:0000318"/>
    <property type="project" value="GO_Central"/>
</dbReference>
<dbReference type="GO" id="GO:0004930">
    <property type="term" value="F:G protein-coupled receptor activity"/>
    <property type="evidence" value="ECO:0007669"/>
    <property type="project" value="UniProtKB-KW"/>
</dbReference>
<dbReference type="GO" id="GO:0004984">
    <property type="term" value="F:olfactory receptor activity"/>
    <property type="evidence" value="ECO:0000318"/>
    <property type="project" value="GO_Central"/>
</dbReference>
<dbReference type="CDD" id="cd15939">
    <property type="entry name" value="7tmA_OR4A-like"/>
    <property type="match status" value="1"/>
</dbReference>
<dbReference type="FunFam" id="1.20.1070.10:FF:000007">
    <property type="entry name" value="Olfactory receptor"/>
    <property type="match status" value="1"/>
</dbReference>
<dbReference type="Gene3D" id="1.20.1070.10">
    <property type="entry name" value="Rhodopsin 7-helix transmembrane proteins"/>
    <property type="match status" value="1"/>
</dbReference>
<dbReference type="InterPro" id="IPR000276">
    <property type="entry name" value="GPCR_Rhodpsn"/>
</dbReference>
<dbReference type="InterPro" id="IPR017452">
    <property type="entry name" value="GPCR_Rhodpsn_7TM"/>
</dbReference>
<dbReference type="InterPro" id="IPR000725">
    <property type="entry name" value="Olfact_rcpt"/>
</dbReference>
<dbReference type="InterPro" id="IPR050427">
    <property type="entry name" value="Olfactory_Receptors"/>
</dbReference>
<dbReference type="PANTHER" id="PTHR48002">
    <property type="entry name" value="OLFACTORY RECEPTOR"/>
    <property type="match status" value="1"/>
</dbReference>
<dbReference type="Pfam" id="PF13853">
    <property type="entry name" value="7tm_4"/>
    <property type="match status" value="1"/>
</dbReference>
<dbReference type="PRINTS" id="PR00237">
    <property type="entry name" value="GPCRRHODOPSN"/>
</dbReference>
<dbReference type="PRINTS" id="PR00245">
    <property type="entry name" value="OLFACTORYR"/>
</dbReference>
<dbReference type="SUPFAM" id="SSF81321">
    <property type="entry name" value="Family A G protein-coupled receptor-like"/>
    <property type="match status" value="1"/>
</dbReference>
<dbReference type="PROSITE" id="PS50262">
    <property type="entry name" value="G_PROTEIN_RECEP_F1_2"/>
    <property type="match status" value="1"/>
</dbReference>
<evidence type="ECO:0000255" key="1"/>
<evidence type="ECO:0000255" key="2">
    <source>
        <dbReference type="PROSITE-ProRule" id="PRU00521"/>
    </source>
</evidence>
<evidence type="ECO:0000305" key="3"/>
<comment type="function">
    <text evidence="3">Odorant receptor.</text>
</comment>
<comment type="subcellular location">
    <subcellularLocation>
        <location>Cell membrane</location>
        <topology>Multi-pass membrane protein</topology>
    </subcellularLocation>
</comment>
<comment type="similarity">
    <text evidence="2">Belongs to the G-protein coupled receptor 1 family.</text>
</comment>
<comment type="online information" name="Human Olfactory Receptor Data Exploratorium (HORDE)">
    <link uri="http://genome.weizmann.ac.il/horde/card/index/symbol:OR4C46"/>
</comment>
<accession>A6NHA9</accession>
<gene>
    <name type="primary">OR4C46</name>
</gene>
<sequence length="309" mass="34533">MENRNNMTEFVLLGLTENPKMQKIIFVVFFVIYIITVVGYVLIVVTITASPSLGSPMYLSLAYLSFIDACYSSVNTPNLITHSLYGKKAILFNGCMTQVFGEHFFGGAEGILLTVMAYDHYVAICKPLHYMTIMNQCVCALLMGVVWMGGFLHATIQILFIFQLPFCGPNVIDHFMCDLNPLLNLACTDTHMLELFIAANSGFICLLNFALLLVSYVVILCSLRTHSLEARHKALSTCVSHITVVILFFVPCIFVYMRPAATLPIDKAVAIFYTMITPMLNPLIYTLKNAQMKNAIRKLCSRKDISGDK</sequence>
<protein>
    <recommendedName>
        <fullName>Olfactory receptor 4C46</fullName>
    </recommendedName>
</protein>